<accession>P0ADL4</accession>
<accession>P31439</accession>
<organism>
    <name type="scientific">Escherichia coli O6:H1 (strain CFT073 / ATCC 700928 / UPEC)</name>
    <dbReference type="NCBI Taxonomy" id="199310"/>
    <lineage>
        <taxon>Bacteria</taxon>
        <taxon>Pseudomonadati</taxon>
        <taxon>Pseudomonadota</taxon>
        <taxon>Gammaproteobacteria</taxon>
        <taxon>Enterobacterales</taxon>
        <taxon>Enterobacteriaceae</taxon>
        <taxon>Escherichia</taxon>
    </lineage>
</organism>
<dbReference type="EMBL" id="AE014075">
    <property type="protein sequence ID" value="AAN83021.1"/>
    <property type="status" value="ALT_INIT"/>
    <property type="molecule type" value="Genomic_DNA"/>
</dbReference>
<dbReference type="RefSeq" id="WP_001295241.1">
    <property type="nucleotide sequence ID" value="NZ_CP051263.1"/>
</dbReference>
<dbReference type="SMR" id="P0ADL4"/>
<dbReference type="STRING" id="199310.c4587"/>
<dbReference type="KEGG" id="ecc:c4587"/>
<dbReference type="eggNOG" id="ENOG502ZBKK">
    <property type="taxonomic scope" value="Bacteria"/>
</dbReference>
<dbReference type="HOGENOM" id="CLU_145987_0_0_6"/>
<dbReference type="Proteomes" id="UP000001410">
    <property type="component" value="Chromosome"/>
</dbReference>
<dbReference type="InterPro" id="IPR009587">
    <property type="entry name" value="DUF1198"/>
</dbReference>
<dbReference type="Pfam" id="PF06711">
    <property type="entry name" value="DUF1198"/>
    <property type="match status" value="1"/>
</dbReference>
<feature type="chain" id="PRO_0000169620" description="Uncharacterized protein YicN">
    <location>
        <begin position="1"/>
        <end position="150"/>
    </location>
</feature>
<proteinExistence type="predicted"/>
<sequence>MIWIMLATLAVVFVVGFRVLTSGARKAIRRLSDRLNIDVVPVESMVDQMGKSAGDEFLRYLHRPDESHLQNAAQVLLIWQIVIVDGSEQNLLQWHRILQKARLAAPITDAQVRLALGFLRETEPEMQDINAFQMRYNAFFQPAEGVHWLH</sequence>
<comment type="sequence caution" evidence="1">
    <conflict type="erroneous initiation">
        <sequence resource="EMBL-CDS" id="AAN83021"/>
    </conflict>
</comment>
<protein>
    <recommendedName>
        <fullName>Uncharacterized protein YicN</fullName>
    </recommendedName>
</protein>
<name>YICN_ECOL6</name>
<keyword id="KW-1185">Reference proteome</keyword>
<gene>
    <name type="primary">yicN</name>
    <name type="ordered locus">c4587</name>
</gene>
<reference key="1">
    <citation type="journal article" date="2002" name="Proc. Natl. Acad. Sci. U.S.A.">
        <title>Extensive mosaic structure revealed by the complete genome sequence of uropathogenic Escherichia coli.</title>
        <authorList>
            <person name="Welch R.A."/>
            <person name="Burland V."/>
            <person name="Plunkett G. III"/>
            <person name="Redford P."/>
            <person name="Roesch P."/>
            <person name="Rasko D."/>
            <person name="Buckles E.L."/>
            <person name="Liou S.-R."/>
            <person name="Boutin A."/>
            <person name="Hackett J."/>
            <person name="Stroud D."/>
            <person name="Mayhew G.F."/>
            <person name="Rose D.J."/>
            <person name="Zhou S."/>
            <person name="Schwartz D.C."/>
            <person name="Perna N.T."/>
            <person name="Mobley H.L.T."/>
            <person name="Donnenberg M.S."/>
            <person name="Blattner F.R."/>
        </authorList>
    </citation>
    <scope>NUCLEOTIDE SEQUENCE [LARGE SCALE GENOMIC DNA]</scope>
    <source>
        <strain>CFT073 / ATCC 700928 / UPEC</strain>
    </source>
</reference>
<evidence type="ECO:0000305" key="1"/>